<proteinExistence type="inferred from homology"/>
<comment type="function">
    <text evidence="1">Catalyzes the specific phosphorylation of 1,6-anhydro-N-acetylmuramic acid (anhMurNAc) with the simultaneous cleavage of the 1,6-anhydro ring, generating MurNAc-6-P. Is required for the utilization of anhMurNAc either imported from the medium or derived from its own cell wall murein, and thus plays a role in cell wall recycling.</text>
</comment>
<comment type="catalytic activity">
    <reaction evidence="1">
        <text>1,6-anhydro-N-acetyl-beta-muramate + ATP + H2O = N-acetyl-D-muramate 6-phosphate + ADP + H(+)</text>
        <dbReference type="Rhea" id="RHEA:24952"/>
        <dbReference type="ChEBI" id="CHEBI:15377"/>
        <dbReference type="ChEBI" id="CHEBI:15378"/>
        <dbReference type="ChEBI" id="CHEBI:30616"/>
        <dbReference type="ChEBI" id="CHEBI:58690"/>
        <dbReference type="ChEBI" id="CHEBI:58722"/>
        <dbReference type="ChEBI" id="CHEBI:456216"/>
        <dbReference type="EC" id="2.7.1.170"/>
    </reaction>
</comment>
<comment type="pathway">
    <text evidence="1">Amino-sugar metabolism; 1,6-anhydro-N-acetylmuramate degradation.</text>
</comment>
<comment type="pathway">
    <text evidence="1">Cell wall biogenesis; peptidoglycan recycling.</text>
</comment>
<comment type="similarity">
    <text evidence="1">Belongs to the anhydro-N-acetylmuramic acid kinase family.</text>
</comment>
<accession>A2S587</accession>
<evidence type="ECO:0000255" key="1">
    <source>
        <dbReference type="HAMAP-Rule" id="MF_01270"/>
    </source>
</evidence>
<gene>
    <name evidence="1" type="primary">anmK</name>
    <name type="ordered locus">BMA10229_A1121</name>
</gene>
<protein>
    <recommendedName>
        <fullName evidence="1">Anhydro-N-acetylmuramic acid kinase</fullName>
        <ecNumber evidence="1">2.7.1.170</ecNumber>
    </recommendedName>
    <alternativeName>
        <fullName evidence="1">AnhMurNAc kinase</fullName>
    </alternativeName>
</protein>
<keyword id="KW-0067">ATP-binding</keyword>
<keyword id="KW-0119">Carbohydrate metabolism</keyword>
<keyword id="KW-0418">Kinase</keyword>
<keyword id="KW-0547">Nucleotide-binding</keyword>
<keyword id="KW-0808">Transferase</keyword>
<organism>
    <name type="scientific">Burkholderia mallei (strain NCTC 10229)</name>
    <dbReference type="NCBI Taxonomy" id="412022"/>
    <lineage>
        <taxon>Bacteria</taxon>
        <taxon>Pseudomonadati</taxon>
        <taxon>Pseudomonadota</taxon>
        <taxon>Betaproteobacteria</taxon>
        <taxon>Burkholderiales</taxon>
        <taxon>Burkholderiaceae</taxon>
        <taxon>Burkholderia</taxon>
        <taxon>pseudomallei group</taxon>
    </lineage>
</organism>
<feature type="chain" id="PRO_1000165158" description="Anhydro-N-acetylmuramic acid kinase">
    <location>
        <begin position="1"/>
        <end position="392"/>
    </location>
</feature>
<feature type="binding site" evidence="1">
    <location>
        <begin position="22"/>
        <end position="29"/>
    </location>
    <ligand>
        <name>ATP</name>
        <dbReference type="ChEBI" id="CHEBI:30616"/>
    </ligand>
</feature>
<reference key="1">
    <citation type="journal article" date="2010" name="Genome Biol. Evol.">
        <title>Continuing evolution of Burkholderia mallei through genome reduction and large-scale rearrangements.</title>
        <authorList>
            <person name="Losada L."/>
            <person name="Ronning C.M."/>
            <person name="DeShazer D."/>
            <person name="Woods D."/>
            <person name="Fedorova N."/>
            <person name="Kim H.S."/>
            <person name="Shabalina S.A."/>
            <person name="Pearson T.R."/>
            <person name="Brinkac L."/>
            <person name="Tan P."/>
            <person name="Nandi T."/>
            <person name="Crabtree J."/>
            <person name="Badger J."/>
            <person name="Beckstrom-Sternberg S."/>
            <person name="Saqib M."/>
            <person name="Schutzer S.E."/>
            <person name="Keim P."/>
            <person name="Nierman W.C."/>
        </authorList>
    </citation>
    <scope>NUCLEOTIDE SEQUENCE [LARGE SCALE GENOMIC DNA]</scope>
    <source>
        <strain>NCTC 10229</strain>
    </source>
</reference>
<sequence>MTSNRMQTGHPADGVYFGLMSGTSMDGVDGVAVRFEAGKPPAVLSEAFVGFADTLRDALFALQQPGGDEIEREALAANALAARYAVCCHELLRTAGLLPDDVRALGVHGQTVRHRPERGYTRQLNNAALLAELTRIDVIADFRSRDVAAGGQGAPLVPAFHATVFGSPDETRVVCNLGGISNITILPAGGGPQGEGHARNDTVRGHDCGPANALIDAWVERHLKQPFDDGGRFAARGKVDETLLAALLDEPYFRQNAPKSTGRDLFNADWLDAKLAGFQHLAPENVQATLTALTAATVADEIARHAGDCRAVYVCGGGARNPVLLDALATALAARGLDAAVATTAALGVPPQQVESLAFAWLAYRFNARAPGNVSTVTGAAGERVLGALYPR</sequence>
<dbReference type="EC" id="2.7.1.170" evidence="1"/>
<dbReference type="EMBL" id="CP000546">
    <property type="protein sequence ID" value="ABN03923.1"/>
    <property type="molecule type" value="Genomic_DNA"/>
</dbReference>
<dbReference type="SMR" id="A2S587"/>
<dbReference type="KEGG" id="bml:BMA10229_A1121"/>
<dbReference type="HOGENOM" id="CLU_038782_0_0_4"/>
<dbReference type="UniPathway" id="UPA00343"/>
<dbReference type="UniPathway" id="UPA00544"/>
<dbReference type="Proteomes" id="UP000002283">
    <property type="component" value="Chromosome I"/>
</dbReference>
<dbReference type="GO" id="GO:0005524">
    <property type="term" value="F:ATP binding"/>
    <property type="evidence" value="ECO:0007669"/>
    <property type="project" value="UniProtKB-UniRule"/>
</dbReference>
<dbReference type="GO" id="GO:0016301">
    <property type="term" value="F:kinase activity"/>
    <property type="evidence" value="ECO:0007669"/>
    <property type="project" value="UniProtKB-KW"/>
</dbReference>
<dbReference type="GO" id="GO:0016773">
    <property type="term" value="F:phosphotransferase activity, alcohol group as acceptor"/>
    <property type="evidence" value="ECO:0007669"/>
    <property type="project" value="UniProtKB-UniRule"/>
</dbReference>
<dbReference type="GO" id="GO:0097175">
    <property type="term" value="P:1,6-anhydro-N-acetyl-beta-muramic acid catabolic process"/>
    <property type="evidence" value="ECO:0007669"/>
    <property type="project" value="UniProtKB-UniRule"/>
</dbReference>
<dbReference type="GO" id="GO:0006040">
    <property type="term" value="P:amino sugar metabolic process"/>
    <property type="evidence" value="ECO:0007669"/>
    <property type="project" value="InterPro"/>
</dbReference>
<dbReference type="GO" id="GO:0009254">
    <property type="term" value="P:peptidoglycan turnover"/>
    <property type="evidence" value="ECO:0007669"/>
    <property type="project" value="UniProtKB-UniRule"/>
</dbReference>
<dbReference type="Gene3D" id="3.30.420.40">
    <property type="match status" value="2"/>
</dbReference>
<dbReference type="HAMAP" id="MF_01270">
    <property type="entry name" value="AnhMurNAc_kinase"/>
    <property type="match status" value="1"/>
</dbReference>
<dbReference type="InterPro" id="IPR005338">
    <property type="entry name" value="Anhydro_N_Ac-Mur_kinase"/>
</dbReference>
<dbReference type="InterPro" id="IPR043129">
    <property type="entry name" value="ATPase_NBD"/>
</dbReference>
<dbReference type="NCBIfam" id="NF007139">
    <property type="entry name" value="PRK09585.1-3"/>
    <property type="match status" value="1"/>
</dbReference>
<dbReference type="NCBIfam" id="NF007140">
    <property type="entry name" value="PRK09585.1-4"/>
    <property type="match status" value="1"/>
</dbReference>
<dbReference type="PANTHER" id="PTHR30605">
    <property type="entry name" value="ANHYDRO-N-ACETYLMURAMIC ACID KINASE"/>
    <property type="match status" value="1"/>
</dbReference>
<dbReference type="PANTHER" id="PTHR30605:SF0">
    <property type="entry name" value="ANHYDRO-N-ACETYLMURAMIC ACID KINASE"/>
    <property type="match status" value="1"/>
</dbReference>
<dbReference type="Pfam" id="PF03702">
    <property type="entry name" value="AnmK"/>
    <property type="match status" value="1"/>
</dbReference>
<dbReference type="SUPFAM" id="SSF53067">
    <property type="entry name" value="Actin-like ATPase domain"/>
    <property type="match status" value="1"/>
</dbReference>
<name>ANMK_BURM9</name>